<accession>P0AGG7</accession>
<accession>P33636</accession>
<accession>P76593</accession>
<accession>P77000</accession>
<accession>P77001</accession>
<reference key="1">
    <citation type="journal article" date="2002" name="Nucleic Acids Res.">
        <title>Genome sequence of Shigella flexneri 2a: insights into pathogenicity through comparison with genomes of Escherichia coli K12 and O157.</title>
        <authorList>
            <person name="Jin Q."/>
            <person name="Yuan Z."/>
            <person name="Xu J."/>
            <person name="Wang Y."/>
            <person name="Shen Y."/>
            <person name="Lu W."/>
            <person name="Wang J."/>
            <person name="Liu H."/>
            <person name="Yang J."/>
            <person name="Yang F."/>
            <person name="Zhang X."/>
            <person name="Zhang J."/>
            <person name="Yang G."/>
            <person name="Wu H."/>
            <person name="Qu D."/>
            <person name="Dong J."/>
            <person name="Sun L."/>
            <person name="Xue Y."/>
            <person name="Zhao A."/>
            <person name="Gao Y."/>
            <person name="Zhu J."/>
            <person name="Kan B."/>
            <person name="Ding K."/>
            <person name="Chen S."/>
            <person name="Cheng H."/>
            <person name="Yao Z."/>
            <person name="He B."/>
            <person name="Chen R."/>
            <person name="Ma D."/>
            <person name="Qiang B."/>
            <person name="Wen Y."/>
            <person name="Hou Y."/>
            <person name="Yu J."/>
        </authorList>
    </citation>
    <scope>NUCLEOTIDE SEQUENCE [LARGE SCALE GENOMIC DNA]</scope>
    <source>
        <strain>301 / Serotype 2a</strain>
    </source>
</reference>
<reference key="2">
    <citation type="journal article" date="2003" name="Infect. Immun.">
        <title>Complete genome sequence and comparative genomics of Shigella flexneri serotype 2a strain 2457T.</title>
        <authorList>
            <person name="Wei J."/>
            <person name="Goldberg M.B."/>
            <person name="Burland V."/>
            <person name="Venkatesan M.M."/>
            <person name="Deng W."/>
            <person name="Fournier G."/>
            <person name="Mayhew G.F."/>
            <person name="Plunkett G. III"/>
            <person name="Rose D.J."/>
            <person name="Darling A."/>
            <person name="Mau B."/>
            <person name="Perna N.T."/>
            <person name="Payne S.M."/>
            <person name="Runyen-Janecky L.J."/>
            <person name="Zhou S."/>
            <person name="Schwartz D.C."/>
            <person name="Blattner F.R."/>
        </authorList>
    </citation>
    <scope>NUCLEOTIDE SEQUENCE [LARGE SCALE GENOMIC DNA]</scope>
    <source>
        <strain>ATCC 700930 / 2457T / Serotype 2a</strain>
    </source>
</reference>
<keyword id="KW-0963">Cytoplasm</keyword>
<keyword id="KW-1015">Disulfide bond</keyword>
<keyword id="KW-0249">Electron transport</keyword>
<keyword id="KW-0479">Metal-binding</keyword>
<keyword id="KW-0520">NAD</keyword>
<keyword id="KW-0560">Oxidoreductase</keyword>
<keyword id="KW-0676">Redox-active center</keyword>
<keyword id="KW-1185">Reference proteome</keyword>
<keyword id="KW-0813">Transport</keyword>
<keyword id="KW-0862">Zinc</keyword>
<keyword id="KW-0863">Zinc-finger</keyword>
<proteinExistence type="inferred from homology"/>
<organism>
    <name type="scientific">Shigella flexneri</name>
    <dbReference type="NCBI Taxonomy" id="623"/>
    <lineage>
        <taxon>Bacteria</taxon>
        <taxon>Pseudomonadati</taxon>
        <taxon>Pseudomonadota</taxon>
        <taxon>Gammaproteobacteria</taxon>
        <taxon>Enterobacterales</taxon>
        <taxon>Enterobacteriaceae</taxon>
        <taxon>Shigella</taxon>
    </lineage>
</organism>
<gene>
    <name type="primary">trxC</name>
    <name type="ordered locus">SF2644</name>
    <name type="ordered locus">S2817</name>
</gene>
<protein>
    <recommendedName>
        <fullName>Thioredoxin 2</fullName>
        <shortName>Trx-2</shortName>
        <ecNumber>1.8.1.8</ecNumber>
    </recommendedName>
    <alternativeName>
        <fullName>Protein-disulfide reductase</fullName>
    </alternativeName>
</protein>
<feature type="chain" id="PRO_0000120105" description="Thioredoxin 2">
    <location>
        <begin position="1"/>
        <end position="139"/>
    </location>
</feature>
<feature type="domain" description="Thioredoxin" evidence="3">
    <location>
        <begin position="26"/>
        <end position="139"/>
    </location>
</feature>
<feature type="zinc finger region" evidence="2">
    <location>
        <begin position="5"/>
        <end position="18"/>
    </location>
</feature>
<feature type="disulfide bond" description="Redox-active" evidence="3">
    <location>
        <begin position="64"/>
        <end position="67"/>
    </location>
</feature>
<comment type="function">
    <text evidence="1">Efficient electron donor for the essential enzyme ribonucleotide reductase. Is also able to reduce the interchain disulfide bridges of insulin (By similarity).</text>
</comment>
<comment type="catalytic activity">
    <reaction>
        <text>[protein]-dithiol + NAD(+) = [protein]-disulfide + NADH + H(+)</text>
        <dbReference type="Rhea" id="RHEA:18749"/>
        <dbReference type="Rhea" id="RHEA-COMP:10593"/>
        <dbReference type="Rhea" id="RHEA-COMP:10594"/>
        <dbReference type="ChEBI" id="CHEBI:15378"/>
        <dbReference type="ChEBI" id="CHEBI:29950"/>
        <dbReference type="ChEBI" id="CHEBI:50058"/>
        <dbReference type="ChEBI" id="CHEBI:57540"/>
        <dbReference type="ChEBI" id="CHEBI:57945"/>
        <dbReference type="EC" id="1.8.1.8"/>
    </reaction>
</comment>
<comment type="catalytic activity">
    <reaction>
        <text>[protein]-dithiol + NADP(+) = [protein]-disulfide + NADPH + H(+)</text>
        <dbReference type="Rhea" id="RHEA:18753"/>
        <dbReference type="Rhea" id="RHEA-COMP:10593"/>
        <dbReference type="Rhea" id="RHEA-COMP:10594"/>
        <dbReference type="ChEBI" id="CHEBI:15378"/>
        <dbReference type="ChEBI" id="CHEBI:29950"/>
        <dbReference type="ChEBI" id="CHEBI:50058"/>
        <dbReference type="ChEBI" id="CHEBI:57783"/>
        <dbReference type="ChEBI" id="CHEBI:58349"/>
        <dbReference type="EC" id="1.8.1.8"/>
    </reaction>
</comment>
<comment type="subcellular location">
    <subcellularLocation>
        <location evidence="1">Cytoplasm</location>
    </subcellularLocation>
</comment>
<comment type="similarity">
    <text evidence="4">Belongs to the thioredoxin family.</text>
</comment>
<sequence length="139" mass="15555">MNTVCTHCQAINRIPDDRIEDAAKCGRCGHDLFDGEVINATGETLDKLLKDDLPVVIDFWAPWCGPCRNFAPIFEDVAQERSGKVRFVKVNTEAERELSSRFGIRSIPTIMIFKNGQVVDMLNGAVPKAPFDSWLNESL</sequence>
<dbReference type="EC" id="1.8.1.8"/>
<dbReference type="EMBL" id="AE005674">
    <property type="protein sequence ID" value="AAN44140.1"/>
    <property type="molecule type" value="Genomic_DNA"/>
</dbReference>
<dbReference type="EMBL" id="AE014073">
    <property type="protein sequence ID" value="AAP17964.1"/>
    <property type="molecule type" value="Genomic_DNA"/>
</dbReference>
<dbReference type="RefSeq" id="NP_708433.1">
    <property type="nucleotide sequence ID" value="NC_004337.2"/>
</dbReference>
<dbReference type="RefSeq" id="WP_001098726.1">
    <property type="nucleotide sequence ID" value="NZ_WPGW01000044.1"/>
</dbReference>
<dbReference type="SMR" id="P0AGG7"/>
<dbReference type="STRING" id="198214.SF2644"/>
<dbReference type="PaxDb" id="198214-SF2644"/>
<dbReference type="GeneID" id="1026952"/>
<dbReference type="GeneID" id="93774504"/>
<dbReference type="KEGG" id="sfl:SF2644"/>
<dbReference type="KEGG" id="sfx:S2817"/>
<dbReference type="PATRIC" id="fig|198214.7.peg.3154"/>
<dbReference type="HOGENOM" id="CLU_090389_10_0_6"/>
<dbReference type="Proteomes" id="UP000001006">
    <property type="component" value="Chromosome"/>
</dbReference>
<dbReference type="Proteomes" id="UP000002673">
    <property type="component" value="Chromosome"/>
</dbReference>
<dbReference type="GO" id="GO:0005829">
    <property type="term" value="C:cytosol"/>
    <property type="evidence" value="ECO:0007669"/>
    <property type="project" value="TreeGrafter"/>
</dbReference>
<dbReference type="GO" id="GO:0047134">
    <property type="term" value="F:protein-disulfide reductase [NAD(P)H] activity"/>
    <property type="evidence" value="ECO:0007669"/>
    <property type="project" value="UniProtKB-EC"/>
</dbReference>
<dbReference type="GO" id="GO:0008270">
    <property type="term" value="F:zinc ion binding"/>
    <property type="evidence" value="ECO:0007669"/>
    <property type="project" value="UniProtKB-KW"/>
</dbReference>
<dbReference type="CDD" id="cd02947">
    <property type="entry name" value="TRX_family"/>
    <property type="match status" value="1"/>
</dbReference>
<dbReference type="FunFam" id="2.30.30.380:FF:000002">
    <property type="entry name" value="Thioredoxin"/>
    <property type="match status" value="1"/>
</dbReference>
<dbReference type="FunFam" id="3.40.30.10:FF:000001">
    <property type="entry name" value="Thioredoxin"/>
    <property type="match status" value="1"/>
</dbReference>
<dbReference type="Gene3D" id="3.40.30.10">
    <property type="entry name" value="Glutaredoxin"/>
    <property type="match status" value="1"/>
</dbReference>
<dbReference type="Gene3D" id="2.30.30.380">
    <property type="entry name" value="Zn-finger domain of Sec23/24"/>
    <property type="match status" value="1"/>
</dbReference>
<dbReference type="InterPro" id="IPR049299">
    <property type="entry name" value="Thio2_N"/>
</dbReference>
<dbReference type="InterPro" id="IPR005746">
    <property type="entry name" value="Thioredoxin"/>
</dbReference>
<dbReference type="InterPro" id="IPR036249">
    <property type="entry name" value="Thioredoxin-like_sf"/>
</dbReference>
<dbReference type="InterPro" id="IPR017937">
    <property type="entry name" value="Thioredoxin_CS"/>
</dbReference>
<dbReference type="InterPro" id="IPR013766">
    <property type="entry name" value="Thioredoxin_domain"/>
</dbReference>
<dbReference type="NCBIfam" id="NF008229">
    <property type="entry name" value="PRK10996.1"/>
    <property type="match status" value="1"/>
</dbReference>
<dbReference type="NCBIfam" id="TIGR01068">
    <property type="entry name" value="thioredoxin"/>
    <property type="match status" value="1"/>
</dbReference>
<dbReference type="PANTHER" id="PTHR45663">
    <property type="entry name" value="GEO12009P1"/>
    <property type="match status" value="1"/>
</dbReference>
<dbReference type="PANTHER" id="PTHR45663:SF40">
    <property type="entry name" value="THIOREDOXIN 2"/>
    <property type="match status" value="1"/>
</dbReference>
<dbReference type="Pfam" id="PF00085">
    <property type="entry name" value="Thioredoxin"/>
    <property type="match status" value="1"/>
</dbReference>
<dbReference type="Pfam" id="PF21352">
    <property type="entry name" value="Zn_ribbon_Thio2"/>
    <property type="match status" value="1"/>
</dbReference>
<dbReference type="PRINTS" id="PR00421">
    <property type="entry name" value="THIOREDOXIN"/>
</dbReference>
<dbReference type="SUPFAM" id="SSF52833">
    <property type="entry name" value="Thioredoxin-like"/>
    <property type="match status" value="1"/>
</dbReference>
<dbReference type="PROSITE" id="PS00194">
    <property type="entry name" value="THIOREDOXIN_1"/>
    <property type="match status" value="1"/>
</dbReference>
<dbReference type="PROSITE" id="PS51352">
    <property type="entry name" value="THIOREDOXIN_2"/>
    <property type="match status" value="1"/>
</dbReference>
<name>THIO2_SHIFL</name>
<evidence type="ECO:0000250" key="1"/>
<evidence type="ECO:0000255" key="2"/>
<evidence type="ECO:0000255" key="3">
    <source>
        <dbReference type="PROSITE-ProRule" id="PRU00691"/>
    </source>
</evidence>
<evidence type="ECO:0000305" key="4"/>